<comment type="function">
    <text evidence="1">Encapsidates the negative strand viral RNA, protecting it from nucleases. The encapsidated genomic RNA is termed the ribonucleoprotein (RNP) and serves as template for transcription and replication. The RNP needs to be localized in the host nucleus to start an infectious cycle, but is too large to diffuse through the nuclear pore complex. NP comprises at least 2 nuclear localization signals that are responsible for the active RNP import into the nucleus through cellular importin alpha/beta pathway. Later in the infection, nclear export of RNPs are mediated through viral proteins NEP interacting with M1 which binds nucleoproteins. It is possible that nucleoprotein binds directly host exportin-1/XPO1 and plays an active role in RNPs nuclear export. M1 interaction with RNP seems to hide nucleoprotein's nuclear localization signals. Soon after a virion infects a new cell, M1 dissociates from the RNP under acidification of the virion driven by M2 protein. Dissociation of M1 from RNP unmasks nucleoprotein's nuclear localization signals, targeting the RNP to the nucleus.</text>
</comment>
<comment type="subunit">
    <text evidence="1">Homomultimerizes to form the nucleocapsid. May bind host exportin-1/XPO1. Binds to viral genomic RNA. Protein-RNA contacts are mediated by a combination of electrostatic interactions between positively charged residues and the phosphate backbone and planar interactions between aromatic side chains and bases.</text>
</comment>
<comment type="subcellular location">
    <subcellularLocation>
        <location evidence="1">Virion</location>
    </subcellularLocation>
    <subcellularLocation>
        <location evidence="1">Host nucleus</location>
    </subcellularLocation>
</comment>
<comment type="PTM">
    <text evidence="1">Late in virus-infected cells, may be cleaved from a 56-kDa protein to a 53-kDa protein by a cellular caspase. This cleavage might be a marker for the onset of apoptosis in infected cells or have a specific function in virus host interaction.</text>
</comment>
<comment type="similarity">
    <text evidence="1">Belongs to the influenza viruses nucleoprotein family.</text>
</comment>
<gene>
    <name evidence="1" type="primary">NP</name>
</gene>
<reference key="1">
    <citation type="journal article" date="1991" name="J. Virol.">
        <title>Evolution of influenza A virus nucleoprotein genes: implications for the origins of H1N1 human and classical swine viruses.</title>
        <authorList>
            <person name="Gorman O.T."/>
            <person name="Bean W.J."/>
            <person name="Kawaoka Y."/>
            <person name="Donatelli I."/>
            <person name="Guo Y."/>
            <person name="Webster R.G."/>
        </authorList>
    </citation>
    <scope>NUCLEOTIDE SEQUENCE [GENOMIC RNA]</scope>
</reference>
<proteinExistence type="evidence at protein level"/>
<organism>
    <name type="scientific">Influenza A virus (strain A/Wisconsin/3523/1988 H1N1)</name>
    <dbReference type="NCBI Taxonomy" id="380346"/>
    <lineage>
        <taxon>Viruses</taxon>
        <taxon>Riboviria</taxon>
        <taxon>Orthornavirae</taxon>
        <taxon>Negarnaviricota</taxon>
        <taxon>Polyploviricotina</taxon>
        <taxon>Insthoviricetes</taxon>
        <taxon>Articulavirales</taxon>
        <taxon>Orthomyxoviridae</taxon>
        <taxon>Alphainfluenzavirus</taxon>
        <taxon>Alphainfluenzavirus influenzae</taxon>
        <taxon>Influenza A virus</taxon>
    </lineage>
</organism>
<name>NCAP_I88A7</name>
<organismHost>
    <name type="scientific">Aves</name>
    <dbReference type="NCBI Taxonomy" id="8782"/>
</organismHost>
<organismHost>
    <name type="scientific">Homo sapiens</name>
    <name type="common">Human</name>
    <dbReference type="NCBI Taxonomy" id="9606"/>
</organismHost>
<organismHost>
    <name type="scientific">Sus scrofa</name>
    <name type="common">Pig</name>
    <dbReference type="NCBI Taxonomy" id="9823"/>
</organismHost>
<protein>
    <recommendedName>
        <fullName evidence="1">Nucleoprotein</fullName>
    </recommendedName>
    <alternativeName>
        <fullName evidence="1">Nucleocapsid protein</fullName>
        <shortName evidence="1">Protein N</shortName>
    </alternativeName>
</protein>
<evidence type="ECO:0000255" key="1">
    <source>
        <dbReference type="HAMAP-Rule" id="MF_04070"/>
    </source>
</evidence>
<evidence type="ECO:0000256" key="2">
    <source>
        <dbReference type="SAM" id="MobiDB-lite"/>
    </source>
</evidence>
<evidence type="ECO:0007829" key="3">
    <source>
        <dbReference type="PDB" id="4MJ5"/>
    </source>
</evidence>
<keyword id="KW-0002">3D-structure</keyword>
<keyword id="KW-0167">Capsid protein</keyword>
<keyword id="KW-1139">Helical capsid protein</keyword>
<keyword id="KW-1048">Host nucleus</keyword>
<keyword id="KW-0945">Host-virus interaction</keyword>
<keyword id="KW-0687">Ribonucleoprotein</keyword>
<keyword id="KW-0694">RNA-binding</keyword>
<keyword id="KW-0543">Viral nucleoprotein</keyword>
<keyword id="KW-1163">Viral penetration into host nucleus</keyword>
<keyword id="KW-0946">Virion</keyword>
<keyword id="KW-1160">Virus entry into host cell</keyword>
<feature type="chain" id="PRO_0000079114" description="Nucleoprotein">
    <location>
        <begin position="1"/>
        <end position="498"/>
    </location>
</feature>
<feature type="region of interest" description="Disordered" evidence="2">
    <location>
        <begin position="1"/>
        <end position="22"/>
    </location>
</feature>
<feature type="short sequence motif" description="Unconventional nuclear localization signal" evidence="1">
    <location>
        <begin position="1"/>
        <end position="18"/>
    </location>
</feature>
<feature type="short sequence motif" description="Bipartite nuclear localization signal" evidence="1">
    <location>
        <begin position="198"/>
        <end position="216"/>
    </location>
</feature>
<feature type="compositionally biased region" description="Basic and acidic residues" evidence="2">
    <location>
        <begin position="8"/>
        <end position="22"/>
    </location>
</feature>
<feature type="helix" evidence="3">
    <location>
        <begin position="191"/>
        <end position="193"/>
    </location>
</feature>
<dbReference type="EMBL" id="M63755">
    <property type="protein sequence ID" value="AAA52254.1"/>
    <property type="molecule type" value="Genomic_RNA"/>
</dbReference>
<dbReference type="PDB" id="4MJ5">
    <property type="method" value="X-ray"/>
    <property type="resolution" value="2.40 A"/>
    <property type="chains" value="C=188-198"/>
</dbReference>
<dbReference type="PDBsum" id="4MJ5"/>
<dbReference type="SMR" id="P68043"/>
<dbReference type="EvolutionaryTrace" id="P68043"/>
<dbReference type="GO" id="GO:0019029">
    <property type="term" value="C:helical viral capsid"/>
    <property type="evidence" value="ECO:0007669"/>
    <property type="project" value="UniProtKB-UniRule"/>
</dbReference>
<dbReference type="GO" id="GO:0043657">
    <property type="term" value="C:host cell"/>
    <property type="evidence" value="ECO:0007669"/>
    <property type="project" value="GOC"/>
</dbReference>
<dbReference type="GO" id="GO:0042025">
    <property type="term" value="C:host cell nucleus"/>
    <property type="evidence" value="ECO:0007669"/>
    <property type="project" value="UniProtKB-SubCell"/>
</dbReference>
<dbReference type="GO" id="GO:1990904">
    <property type="term" value="C:ribonucleoprotein complex"/>
    <property type="evidence" value="ECO:0007669"/>
    <property type="project" value="UniProtKB-KW"/>
</dbReference>
<dbReference type="GO" id="GO:0019013">
    <property type="term" value="C:viral nucleocapsid"/>
    <property type="evidence" value="ECO:0007669"/>
    <property type="project" value="UniProtKB-UniRule"/>
</dbReference>
<dbReference type="GO" id="GO:0003723">
    <property type="term" value="F:RNA binding"/>
    <property type="evidence" value="ECO:0007669"/>
    <property type="project" value="UniProtKB-UniRule"/>
</dbReference>
<dbReference type="GO" id="GO:0005198">
    <property type="term" value="F:structural molecule activity"/>
    <property type="evidence" value="ECO:0007669"/>
    <property type="project" value="UniProtKB-UniRule"/>
</dbReference>
<dbReference type="GO" id="GO:0046718">
    <property type="term" value="P:symbiont entry into host cell"/>
    <property type="evidence" value="ECO:0007669"/>
    <property type="project" value="UniProtKB-KW"/>
</dbReference>
<dbReference type="GO" id="GO:0075732">
    <property type="term" value="P:viral penetration into host nucleus"/>
    <property type="evidence" value="ECO:0007669"/>
    <property type="project" value="UniProtKB-UniRule"/>
</dbReference>
<dbReference type="HAMAP" id="MF_04070">
    <property type="entry name" value="INFV_NCAP"/>
    <property type="match status" value="1"/>
</dbReference>
<dbReference type="InterPro" id="IPR002141">
    <property type="entry name" value="Flu_NP"/>
</dbReference>
<dbReference type="Pfam" id="PF00506">
    <property type="entry name" value="Flu_NP"/>
    <property type="match status" value="1"/>
</dbReference>
<dbReference type="SUPFAM" id="SSF161003">
    <property type="entry name" value="flu NP-like"/>
    <property type="match status" value="1"/>
</dbReference>
<sequence>MASQGTKRSYEQMETGGERQDATEIRASVGRMIGGIGRFYIQMCTELKLSDYEGRLIQNSITIERMVLSAFDERRNKYLEEHPSAGKDPKKTGGPIYRRVDGKWMRELILYDKEEIRRVWRQANNGEDATAGLTHIMIWHSNLNDATYQRTRALVRTGMDPRMCSLMQGSTLPRRSGAAGAAVKGVGTIAMELIRMIKRGINDRNFWRGENGRRTRIAYERMCNILKGKFQTAAQRAMMDQVRESRNPGNAEIEDLIFLARSALILRGSVAHKSCLPACVYGLAVASGHDFEREGYSLVGIDPFKLLQNSQVFSLIRPNENPAHKSQLVWMACHSAAFEDLRVSSFIRGKKVVPRGKLSTRGVQIASNENVEAMDSSTLELRSRYWAIRTRSGGNTNQQKASAGQISVQPTFSVQRNLPFERATVMAAFSGNNEGRTSDMRTEVIRMMESAKPEDLSFQGRGVFELSDEKATNPIVPSFDMSNEGSYFFGDNAEEYDN</sequence>
<accession>P68043</accession>
<accession>P26075</accession>